<feature type="chain" id="PRO_0000412000" description="Casparian strip membrane protein 6">
    <location>
        <begin position="1"/>
        <end position="217"/>
    </location>
</feature>
<feature type="topological domain" description="Cytoplasmic" evidence="2">
    <location>
        <begin position="1"/>
        <end position="57"/>
    </location>
</feature>
<feature type="transmembrane region" description="Helical" evidence="2">
    <location>
        <begin position="58"/>
        <end position="78"/>
    </location>
</feature>
<feature type="topological domain" description="Extracellular" evidence="2">
    <location>
        <begin position="79"/>
        <end position="103"/>
    </location>
</feature>
<feature type="transmembrane region" description="Helical" evidence="2">
    <location>
        <begin position="104"/>
        <end position="124"/>
    </location>
</feature>
<feature type="topological domain" description="Cytoplasmic" evidence="2">
    <location>
        <begin position="125"/>
        <end position="138"/>
    </location>
</feature>
<feature type="transmembrane region" description="Helical" evidence="2">
    <location>
        <begin position="139"/>
        <end position="159"/>
    </location>
</feature>
<feature type="topological domain" description="Extracellular" evidence="2">
    <location>
        <begin position="160"/>
        <end position="191"/>
    </location>
</feature>
<feature type="transmembrane region" description="Helical" evidence="2">
    <location>
        <begin position="192"/>
        <end position="212"/>
    </location>
</feature>
<feature type="topological domain" description="Cytoplasmic" evidence="2">
    <location>
        <begin position="213"/>
        <end position="217"/>
    </location>
</feature>
<feature type="glycosylation site" description="N-linked (GlcNAc...) asparagine" evidence="2">
    <location>
        <position position="170"/>
    </location>
</feature>
<protein>
    <recommendedName>
        <fullName>Casparian strip membrane protein 6</fullName>
        <shortName>AlCASP6</shortName>
    </recommendedName>
</protein>
<name>CASP6_ARALL</name>
<gene>
    <name type="ORF">ARALYDRAFT_888790</name>
</gene>
<comment type="function">
    <text evidence="1">Regulates membrane-cell wall junctions and localized cell wall deposition. Required for establishment of the Casparian strip membrane domain (CSD) and the subsequent formation of Casparian strips, a cell wall modification of the root endodermis that determines an apoplastic barrier between the intraorganismal apoplasm and the extraorganismal apoplasm and prevents lateral diffusion (By similarity).</text>
</comment>
<comment type="subunit">
    <text evidence="1">Homodimer and heterodimers.</text>
</comment>
<comment type="subcellular location">
    <subcellularLocation>
        <location evidence="1">Cell membrane</location>
        <topology evidence="1">Multi-pass membrane protein</topology>
    </subcellularLocation>
    <text evidence="1">Very restricted localization following a belt shape within the plasma membrane which coincides with the position of the Casparian strip membrane domain in the root endodermis.</text>
</comment>
<comment type="similarity">
    <text evidence="3">Belongs to the Casparian strip membrane proteins (CASP) family.</text>
</comment>
<sequence>MEEAKHIEAVEAKQIEAEEAQRIKAGEAKQIEAGETSRSSRKVITFEPKLVINKGISVLGFVLRLFAVFGTIGSALAMGTTHESVVSLSQLVLLKVKYSDLPTLMFFVVANAIAGGYLVLSLPVSIFHIFSTKAKTSRIILLVIDTVMLALVSSGASAATATVYLAHEGNTTANWPPICQQFDGFCERISGSLIGSFCAVILLMLIVINSAISLSRH</sequence>
<organism>
    <name type="scientific">Arabidopsis lyrata subsp. lyrata</name>
    <name type="common">Lyre-leaved rock-cress</name>
    <dbReference type="NCBI Taxonomy" id="81972"/>
    <lineage>
        <taxon>Eukaryota</taxon>
        <taxon>Viridiplantae</taxon>
        <taxon>Streptophyta</taxon>
        <taxon>Embryophyta</taxon>
        <taxon>Tracheophyta</taxon>
        <taxon>Spermatophyta</taxon>
        <taxon>Magnoliopsida</taxon>
        <taxon>eudicotyledons</taxon>
        <taxon>Gunneridae</taxon>
        <taxon>Pentapetalae</taxon>
        <taxon>rosids</taxon>
        <taxon>malvids</taxon>
        <taxon>Brassicales</taxon>
        <taxon>Brassicaceae</taxon>
        <taxon>Camelineae</taxon>
        <taxon>Arabidopsis</taxon>
    </lineage>
</organism>
<accession>D7KBH3</accession>
<dbReference type="EMBL" id="GL348713">
    <property type="protein sequence ID" value="EFH69050.1"/>
    <property type="molecule type" value="Genomic_DNA"/>
</dbReference>
<dbReference type="STRING" id="81972.D7KBH3"/>
<dbReference type="EnsemblPlants" id="scaffold_101584.1">
    <property type="protein sequence ID" value="scaffold_101584.1"/>
    <property type="gene ID" value="scaffold_101584.1"/>
</dbReference>
<dbReference type="Gramene" id="scaffold_101584.1">
    <property type="protein sequence ID" value="scaffold_101584.1"/>
    <property type="gene ID" value="scaffold_101584.1"/>
</dbReference>
<dbReference type="KEGG" id="aly:9326103"/>
<dbReference type="eggNOG" id="ENOG502SN29">
    <property type="taxonomic scope" value="Eukaryota"/>
</dbReference>
<dbReference type="HOGENOM" id="CLU_066104_3_2_1"/>
<dbReference type="OrthoDB" id="753675at2759"/>
<dbReference type="Proteomes" id="UP000008694">
    <property type="component" value="Unassembled WGS sequence"/>
</dbReference>
<dbReference type="GO" id="GO:0005886">
    <property type="term" value="C:plasma membrane"/>
    <property type="evidence" value="ECO:0007669"/>
    <property type="project" value="UniProtKB-SubCell"/>
</dbReference>
<dbReference type="GO" id="GO:0071555">
    <property type="term" value="P:cell wall organization"/>
    <property type="evidence" value="ECO:0007669"/>
    <property type="project" value="UniProtKB-KW"/>
</dbReference>
<dbReference type="InterPro" id="IPR006459">
    <property type="entry name" value="CASP/CASPL"/>
</dbReference>
<dbReference type="InterPro" id="IPR006702">
    <property type="entry name" value="CASP_dom"/>
</dbReference>
<dbReference type="InterPro" id="IPR044173">
    <property type="entry name" value="CASPL"/>
</dbReference>
<dbReference type="NCBIfam" id="TIGR01569">
    <property type="entry name" value="A_tha_TIGR01569"/>
    <property type="match status" value="1"/>
</dbReference>
<dbReference type="PANTHER" id="PTHR36488:SF12">
    <property type="entry name" value="CASP-LIKE PROTEIN"/>
    <property type="match status" value="1"/>
</dbReference>
<dbReference type="PANTHER" id="PTHR36488">
    <property type="entry name" value="CASP-LIKE PROTEIN 1U1"/>
    <property type="match status" value="1"/>
</dbReference>
<dbReference type="Pfam" id="PF04535">
    <property type="entry name" value="CASP_dom"/>
    <property type="match status" value="1"/>
</dbReference>
<keyword id="KW-1003">Cell membrane</keyword>
<keyword id="KW-0961">Cell wall biogenesis/degradation</keyword>
<keyword id="KW-0325">Glycoprotein</keyword>
<keyword id="KW-0472">Membrane</keyword>
<keyword id="KW-1185">Reference proteome</keyword>
<keyword id="KW-0812">Transmembrane</keyword>
<keyword id="KW-1133">Transmembrane helix</keyword>
<reference key="1">
    <citation type="journal article" date="2011" name="Nat. Genet.">
        <title>The Arabidopsis lyrata genome sequence and the basis of rapid genome size change.</title>
        <authorList>
            <person name="Hu T.T."/>
            <person name="Pattyn P."/>
            <person name="Bakker E.G."/>
            <person name="Cao J."/>
            <person name="Cheng J.-F."/>
            <person name="Clark R.M."/>
            <person name="Fahlgren N."/>
            <person name="Fawcett J.A."/>
            <person name="Grimwood J."/>
            <person name="Gundlach H."/>
            <person name="Haberer G."/>
            <person name="Hollister J.D."/>
            <person name="Ossowski S."/>
            <person name="Ottilar R.P."/>
            <person name="Salamov A.A."/>
            <person name="Schneeberger K."/>
            <person name="Spannagl M."/>
            <person name="Wang X."/>
            <person name="Yang L."/>
            <person name="Nasrallah M.E."/>
            <person name="Bergelson J."/>
            <person name="Carrington J.C."/>
            <person name="Gaut B.S."/>
            <person name="Schmutz J."/>
            <person name="Mayer K.F.X."/>
            <person name="Van de Peer Y."/>
            <person name="Grigoriev I.V."/>
            <person name="Nordborg M."/>
            <person name="Weigel D."/>
            <person name="Guo Y.-L."/>
        </authorList>
    </citation>
    <scope>NUCLEOTIDE SEQUENCE [LARGE SCALE GENOMIC DNA]</scope>
    <source>
        <strain>cv. MN47</strain>
    </source>
</reference>
<reference key="2">
    <citation type="journal article" date="2014" name="Plant Physiol.">
        <title>Functional and evolutionary analysis of the CASPARIAN STRIP MEMBRANE DOMAIN PROTEIN family.</title>
        <authorList>
            <person name="Roppolo D."/>
            <person name="Boeckmann B."/>
            <person name="Pfister A."/>
            <person name="Boutet E."/>
            <person name="Rubio M.C."/>
            <person name="Denervaud-Tendon V."/>
            <person name="Vermeer J.E."/>
            <person name="Gheyselinck J."/>
            <person name="Xenarios I."/>
            <person name="Geldner N."/>
        </authorList>
    </citation>
    <scope>GENE FAMILY</scope>
    <scope>NOMENCLATURE</scope>
</reference>
<proteinExistence type="inferred from homology"/>
<evidence type="ECO:0000250" key="1"/>
<evidence type="ECO:0000255" key="2"/>
<evidence type="ECO:0000305" key="3"/>